<reference key="1">
    <citation type="journal article" date="2005" name="J. Bacteriol.">
        <title>Genomic sequence of an otitis media isolate of nontypeable Haemophilus influenzae: comparative study with H. influenzae serotype d, strain KW20.</title>
        <authorList>
            <person name="Harrison A."/>
            <person name="Dyer D.W."/>
            <person name="Gillaspy A."/>
            <person name="Ray W.C."/>
            <person name="Mungur R."/>
            <person name="Carson M.B."/>
            <person name="Zhong H."/>
            <person name="Gipson J."/>
            <person name="Gipson M."/>
            <person name="Johnson L.S."/>
            <person name="Lewis L."/>
            <person name="Bakaletz L.O."/>
            <person name="Munson R.S. Jr."/>
        </authorList>
    </citation>
    <scope>NUCLEOTIDE SEQUENCE [LARGE SCALE GENOMIC DNA]</scope>
    <source>
        <strain>86-028NP</strain>
    </source>
</reference>
<accession>Q4QND7</accession>
<organism>
    <name type="scientific">Haemophilus influenzae (strain 86-028NP)</name>
    <dbReference type="NCBI Taxonomy" id="281310"/>
    <lineage>
        <taxon>Bacteria</taxon>
        <taxon>Pseudomonadati</taxon>
        <taxon>Pseudomonadota</taxon>
        <taxon>Gammaproteobacteria</taxon>
        <taxon>Pasteurellales</taxon>
        <taxon>Pasteurellaceae</taxon>
        <taxon>Haemophilus</taxon>
    </lineage>
</organism>
<name>ACCA_HAEI8</name>
<keyword id="KW-0067">ATP-binding</keyword>
<keyword id="KW-0963">Cytoplasm</keyword>
<keyword id="KW-0275">Fatty acid biosynthesis</keyword>
<keyword id="KW-0276">Fatty acid metabolism</keyword>
<keyword id="KW-0444">Lipid biosynthesis</keyword>
<keyword id="KW-0443">Lipid metabolism</keyword>
<keyword id="KW-0547">Nucleotide-binding</keyword>
<keyword id="KW-0808">Transferase</keyword>
<protein>
    <recommendedName>
        <fullName evidence="1">Acetyl-coenzyme A carboxylase carboxyl transferase subunit alpha</fullName>
        <shortName evidence="1">ACCase subunit alpha</shortName>
        <shortName evidence="1">Acetyl-CoA carboxylase carboxyltransferase subunit alpha</shortName>
        <ecNumber evidence="1">2.1.3.15</ecNumber>
    </recommendedName>
</protein>
<dbReference type="EC" id="2.1.3.15" evidence="1"/>
<dbReference type="EMBL" id="CP000057">
    <property type="protein sequence ID" value="AAX87460.1"/>
    <property type="molecule type" value="Genomic_DNA"/>
</dbReference>
<dbReference type="RefSeq" id="WP_011272030.1">
    <property type="nucleotide sequence ID" value="NC_007146.2"/>
</dbReference>
<dbReference type="SMR" id="Q4QND7"/>
<dbReference type="KEGG" id="hit:NTHI0528"/>
<dbReference type="HOGENOM" id="CLU_015486_0_2_6"/>
<dbReference type="UniPathway" id="UPA00655">
    <property type="reaction ID" value="UER00711"/>
</dbReference>
<dbReference type="Proteomes" id="UP000002525">
    <property type="component" value="Chromosome"/>
</dbReference>
<dbReference type="GO" id="GO:0009317">
    <property type="term" value="C:acetyl-CoA carboxylase complex"/>
    <property type="evidence" value="ECO:0007669"/>
    <property type="project" value="InterPro"/>
</dbReference>
<dbReference type="GO" id="GO:0003989">
    <property type="term" value="F:acetyl-CoA carboxylase activity"/>
    <property type="evidence" value="ECO:0007669"/>
    <property type="project" value="InterPro"/>
</dbReference>
<dbReference type="GO" id="GO:0005524">
    <property type="term" value="F:ATP binding"/>
    <property type="evidence" value="ECO:0007669"/>
    <property type="project" value="UniProtKB-KW"/>
</dbReference>
<dbReference type="GO" id="GO:0016743">
    <property type="term" value="F:carboxyl- or carbamoyltransferase activity"/>
    <property type="evidence" value="ECO:0007669"/>
    <property type="project" value="UniProtKB-UniRule"/>
</dbReference>
<dbReference type="GO" id="GO:0006633">
    <property type="term" value="P:fatty acid biosynthetic process"/>
    <property type="evidence" value="ECO:0007669"/>
    <property type="project" value="UniProtKB-KW"/>
</dbReference>
<dbReference type="GO" id="GO:2001295">
    <property type="term" value="P:malonyl-CoA biosynthetic process"/>
    <property type="evidence" value="ECO:0007669"/>
    <property type="project" value="UniProtKB-UniRule"/>
</dbReference>
<dbReference type="FunFam" id="3.90.226.10:FF:000008">
    <property type="entry name" value="Acetyl-coenzyme A carboxylase carboxyl transferase subunit alpha"/>
    <property type="match status" value="1"/>
</dbReference>
<dbReference type="Gene3D" id="3.90.226.10">
    <property type="entry name" value="2-enoyl-CoA Hydratase, Chain A, domain 1"/>
    <property type="match status" value="1"/>
</dbReference>
<dbReference type="HAMAP" id="MF_00823">
    <property type="entry name" value="AcetylCoA_CT_alpha"/>
    <property type="match status" value="1"/>
</dbReference>
<dbReference type="InterPro" id="IPR001095">
    <property type="entry name" value="Acetyl_CoA_COase_a_su"/>
</dbReference>
<dbReference type="InterPro" id="IPR029045">
    <property type="entry name" value="ClpP/crotonase-like_dom_sf"/>
</dbReference>
<dbReference type="InterPro" id="IPR011763">
    <property type="entry name" value="COA_CT_C"/>
</dbReference>
<dbReference type="NCBIfam" id="TIGR00513">
    <property type="entry name" value="accA"/>
    <property type="match status" value="1"/>
</dbReference>
<dbReference type="NCBIfam" id="NF041504">
    <property type="entry name" value="AccA_sub"/>
    <property type="match status" value="1"/>
</dbReference>
<dbReference type="NCBIfam" id="NF004344">
    <property type="entry name" value="PRK05724.1"/>
    <property type="match status" value="1"/>
</dbReference>
<dbReference type="PANTHER" id="PTHR42853">
    <property type="entry name" value="ACETYL-COENZYME A CARBOXYLASE CARBOXYL TRANSFERASE SUBUNIT ALPHA"/>
    <property type="match status" value="1"/>
</dbReference>
<dbReference type="PANTHER" id="PTHR42853:SF3">
    <property type="entry name" value="ACETYL-COENZYME A CARBOXYLASE CARBOXYL TRANSFERASE SUBUNIT ALPHA, CHLOROPLASTIC"/>
    <property type="match status" value="1"/>
</dbReference>
<dbReference type="Pfam" id="PF03255">
    <property type="entry name" value="ACCA"/>
    <property type="match status" value="1"/>
</dbReference>
<dbReference type="PRINTS" id="PR01069">
    <property type="entry name" value="ACCCTRFRASEA"/>
</dbReference>
<dbReference type="SUPFAM" id="SSF52096">
    <property type="entry name" value="ClpP/crotonase"/>
    <property type="match status" value="1"/>
</dbReference>
<dbReference type="PROSITE" id="PS50989">
    <property type="entry name" value="COA_CT_CTER"/>
    <property type="match status" value="1"/>
</dbReference>
<evidence type="ECO:0000255" key="1">
    <source>
        <dbReference type="HAMAP-Rule" id="MF_00823"/>
    </source>
</evidence>
<evidence type="ECO:0000255" key="2">
    <source>
        <dbReference type="PROSITE-ProRule" id="PRU01137"/>
    </source>
</evidence>
<feature type="chain" id="PRO_0000223775" description="Acetyl-coenzyme A carboxylase carboxyl transferase subunit alpha">
    <location>
        <begin position="1"/>
        <end position="315"/>
    </location>
</feature>
<feature type="domain" description="CoA carboxyltransferase C-terminal" evidence="2">
    <location>
        <begin position="38"/>
        <end position="292"/>
    </location>
</feature>
<comment type="function">
    <text evidence="1">Component of the acetyl coenzyme A carboxylase (ACC) complex. First, biotin carboxylase catalyzes the carboxylation of biotin on its carrier protein (BCCP) and then the CO(2) group is transferred by the carboxyltransferase to acetyl-CoA to form malonyl-CoA.</text>
</comment>
<comment type="catalytic activity">
    <reaction evidence="1">
        <text>N(6)-carboxybiotinyl-L-lysyl-[protein] + acetyl-CoA = N(6)-biotinyl-L-lysyl-[protein] + malonyl-CoA</text>
        <dbReference type="Rhea" id="RHEA:54728"/>
        <dbReference type="Rhea" id="RHEA-COMP:10505"/>
        <dbReference type="Rhea" id="RHEA-COMP:10506"/>
        <dbReference type="ChEBI" id="CHEBI:57288"/>
        <dbReference type="ChEBI" id="CHEBI:57384"/>
        <dbReference type="ChEBI" id="CHEBI:83144"/>
        <dbReference type="ChEBI" id="CHEBI:83145"/>
        <dbReference type="EC" id="2.1.3.15"/>
    </reaction>
</comment>
<comment type="pathway">
    <text evidence="1">Lipid metabolism; malonyl-CoA biosynthesis; malonyl-CoA from acetyl-CoA: step 1/1.</text>
</comment>
<comment type="subunit">
    <text evidence="1">Acetyl-CoA carboxylase is a heterohexamer composed of biotin carboxyl carrier protein (AccB), biotin carboxylase (AccC) and two subunits each of ACCase subunit alpha (AccA) and ACCase subunit beta (AccD).</text>
</comment>
<comment type="subcellular location">
    <subcellularLocation>
        <location evidence="1">Cytoplasm</location>
    </subcellularLocation>
</comment>
<comment type="similarity">
    <text evidence="1">Belongs to the AccA family.</text>
</comment>
<proteinExistence type="inferred from homology"/>
<gene>
    <name evidence="1" type="primary">accA</name>
    <name type="ordered locus">NTHI0528</name>
</gene>
<sequence>MNQEYLDFELPIAELEAKIEALRAASDDKVDLTDEIKRLQKKSNELTKKTFANLDAWQVSRMARHPNRPYTLDYIEHIFTEFEELAGDRAFADDKAIVGGLARLDGRPVMVIGHQKGRSVKEKVQRNFGMPAPEGYRKALRLMEMAERFKLPIITFIDTPGAYPGIGAEERGQAEAIARNLREMAQLTVPVICTVIGEGGSGGALAIGVGDKVNMLQYSTYSVISPEGCASILWKSAEKASTAAEVMGLTASRLKELNLIDSIMQEPLGGAHRNYAKIAENLKLRLKEDLAELDELSKEELLNRRYERLMSYGYC</sequence>